<comment type="function">
    <text evidence="1">Binds the 23S rRNA.</text>
</comment>
<comment type="cofactor">
    <cofactor evidence="1">
        <name>Zn(2+)</name>
        <dbReference type="ChEBI" id="CHEBI:29105"/>
    </cofactor>
    <text evidence="1">Binds 1 zinc ion per subunit.</text>
</comment>
<comment type="subunit">
    <text evidence="1">Part of the 50S ribosomal subunit.</text>
</comment>
<comment type="similarity">
    <text evidence="1">Belongs to the bacterial ribosomal protein bL31 family. Type A subfamily.</text>
</comment>
<keyword id="KW-0479">Metal-binding</keyword>
<keyword id="KW-0687">Ribonucleoprotein</keyword>
<keyword id="KW-0689">Ribosomal protein</keyword>
<keyword id="KW-0694">RNA-binding</keyword>
<keyword id="KW-0699">rRNA-binding</keyword>
<keyword id="KW-0862">Zinc</keyword>
<reference key="1">
    <citation type="journal article" date="2005" name="Science">
        <title>Genome sequence of the PCE-dechlorinating bacterium Dehalococcoides ethenogenes.</title>
        <authorList>
            <person name="Seshadri R."/>
            <person name="Adrian L."/>
            <person name="Fouts D.E."/>
            <person name="Eisen J.A."/>
            <person name="Phillippy A.M."/>
            <person name="Methe B.A."/>
            <person name="Ward N.L."/>
            <person name="Nelson W.C."/>
            <person name="DeBoy R.T."/>
            <person name="Khouri H.M."/>
            <person name="Kolonay J.F."/>
            <person name="Dodson R.J."/>
            <person name="Daugherty S.C."/>
            <person name="Brinkac L.M."/>
            <person name="Sullivan S.A."/>
            <person name="Madupu R."/>
            <person name="Nelson K.E."/>
            <person name="Kang K.H."/>
            <person name="Impraim M."/>
            <person name="Tran K."/>
            <person name="Robinson J.M."/>
            <person name="Forberger H.A."/>
            <person name="Fraser C.M."/>
            <person name="Zinder S.H."/>
            <person name="Heidelberg J.F."/>
        </authorList>
    </citation>
    <scope>NUCLEOTIDE SEQUENCE [LARGE SCALE GENOMIC DNA]</scope>
    <source>
        <strain>ATCC BAA-2266 / KCTC 15142 / 195</strain>
    </source>
</reference>
<protein>
    <recommendedName>
        <fullName evidence="1">Large ribosomal subunit protein bL31</fullName>
    </recommendedName>
    <alternativeName>
        <fullName evidence="2">50S ribosomal protein L31</fullName>
    </alternativeName>
</protein>
<dbReference type="EMBL" id="CP000027">
    <property type="protein sequence ID" value="AAW39458.1"/>
    <property type="molecule type" value="Genomic_DNA"/>
</dbReference>
<dbReference type="RefSeq" id="WP_010937015.1">
    <property type="nucleotide sequence ID" value="NC_002936.3"/>
</dbReference>
<dbReference type="SMR" id="Q3Z6W1"/>
<dbReference type="FunCoup" id="Q3Z6W1">
    <property type="interactions" value="220"/>
</dbReference>
<dbReference type="STRING" id="243164.DET1327"/>
<dbReference type="GeneID" id="3229418"/>
<dbReference type="KEGG" id="det:DET1327"/>
<dbReference type="eggNOG" id="COG0254">
    <property type="taxonomic scope" value="Bacteria"/>
</dbReference>
<dbReference type="HOGENOM" id="CLU_114306_4_3_0"/>
<dbReference type="InParanoid" id="Q3Z6W1"/>
<dbReference type="Proteomes" id="UP000008289">
    <property type="component" value="Chromosome"/>
</dbReference>
<dbReference type="GO" id="GO:1990904">
    <property type="term" value="C:ribonucleoprotein complex"/>
    <property type="evidence" value="ECO:0007669"/>
    <property type="project" value="UniProtKB-KW"/>
</dbReference>
<dbReference type="GO" id="GO:0005840">
    <property type="term" value="C:ribosome"/>
    <property type="evidence" value="ECO:0007669"/>
    <property type="project" value="UniProtKB-KW"/>
</dbReference>
<dbReference type="GO" id="GO:0046872">
    <property type="term" value="F:metal ion binding"/>
    <property type="evidence" value="ECO:0007669"/>
    <property type="project" value="UniProtKB-KW"/>
</dbReference>
<dbReference type="GO" id="GO:0019843">
    <property type="term" value="F:rRNA binding"/>
    <property type="evidence" value="ECO:0007669"/>
    <property type="project" value="UniProtKB-KW"/>
</dbReference>
<dbReference type="GO" id="GO:0003735">
    <property type="term" value="F:structural constituent of ribosome"/>
    <property type="evidence" value="ECO:0007669"/>
    <property type="project" value="InterPro"/>
</dbReference>
<dbReference type="GO" id="GO:0006412">
    <property type="term" value="P:translation"/>
    <property type="evidence" value="ECO:0007669"/>
    <property type="project" value="UniProtKB-UniRule"/>
</dbReference>
<dbReference type="Gene3D" id="4.10.830.30">
    <property type="entry name" value="Ribosomal protein L31"/>
    <property type="match status" value="1"/>
</dbReference>
<dbReference type="HAMAP" id="MF_00501">
    <property type="entry name" value="Ribosomal_bL31_1"/>
    <property type="match status" value="1"/>
</dbReference>
<dbReference type="InterPro" id="IPR034704">
    <property type="entry name" value="Ribosomal_bL28/bL31-like_sf"/>
</dbReference>
<dbReference type="InterPro" id="IPR002150">
    <property type="entry name" value="Ribosomal_bL31"/>
</dbReference>
<dbReference type="InterPro" id="IPR027491">
    <property type="entry name" value="Ribosomal_bL31_A"/>
</dbReference>
<dbReference type="InterPro" id="IPR042105">
    <property type="entry name" value="Ribosomal_bL31_sf"/>
</dbReference>
<dbReference type="NCBIfam" id="TIGR00105">
    <property type="entry name" value="L31"/>
    <property type="match status" value="1"/>
</dbReference>
<dbReference type="NCBIfam" id="NF000612">
    <property type="entry name" value="PRK00019.1"/>
    <property type="match status" value="1"/>
</dbReference>
<dbReference type="NCBIfam" id="NF001809">
    <property type="entry name" value="PRK00528.1"/>
    <property type="match status" value="1"/>
</dbReference>
<dbReference type="PANTHER" id="PTHR33280">
    <property type="entry name" value="50S RIBOSOMAL PROTEIN L31, CHLOROPLASTIC"/>
    <property type="match status" value="1"/>
</dbReference>
<dbReference type="PANTHER" id="PTHR33280:SF1">
    <property type="entry name" value="LARGE RIBOSOMAL SUBUNIT PROTEIN BL31C"/>
    <property type="match status" value="1"/>
</dbReference>
<dbReference type="Pfam" id="PF01197">
    <property type="entry name" value="Ribosomal_L31"/>
    <property type="match status" value="1"/>
</dbReference>
<dbReference type="PRINTS" id="PR01249">
    <property type="entry name" value="RIBOSOMALL31"/>
</dbReference>
<dbReference type="SUPFAM" id="SSF143800">
    <property type="entry name" value="L28p-like"/>
    <property type="match status" value="1"/>
</dbReference>
<name>RL31_DEHM1</name>
<sequence length="68" mass="7677">MKEKIHPKYNTATNVSCACGNTFTVGSTKDSIKVELCAQCHPFYTGEKRMVDTAGRVEKFRQRYGNKT</sequence>
<evidence type="ECO:0000255" key="1">
    <source>
        <dbReference type="HAMAP-Rule" id="MF_00501"/>
    </source>
</evidence>
<evidence type="ECO:0000305" key="2"/>
<gene>
    <name evidence="1" type="primary">rpmE</name>
    <name type="ordered locus">DET1327</name>
</gene>
<proteinExistence type="inferred from homology"/>
<organism>
    <name type="scientific">Dehalococcoides mccartyi (strain ATCC BAA-2266 / KCTC 15142 / 195)</name>
    <name type="common">Dehalococcoides ethenogenes (strain 195)</name>
    <dbReference type="NCBI Taxonomy" id="243164"/>
    <lineage>
        <taxon>Bacteria</taxon>
        <taxon>Bacillati</taxon>
        <taxon>Chloroflexota</taxon>
        <taxon>Dehalococcoidia</taxon>
        <taxon>Dehalococcoidales</taxon>
        <taxon>Dehalococcoidaceae</taxon>
        <taxon>Dehalococcoides</taxon>
    </lineage>
</organism>
<feature type="chain" id="PRO_0000259180" description="Large ribosomal subunit protein bL31">
    <location>
        <begin position="1"/>
        <end position="68"/>
    </location>
</feature>
<feature type="binding site" evidence="1">
    <location>
        <position position="17"/>
    </location>
    <ligand>
        <name>Zn(2+)</name>
        <dbReference type="ChEBI" id="CHEBI:29105"/>
    </ligand>
</feature>
<feature type="binding site" evidence="1">
    <location>
        <position position="19"/>
    </location>
    <ligand>
        <name>Zn(2+)</name>
        <dbReference type="ChEBI" id="CHEBI:29105"/>
    </ligand>
</feature>
<feature type="binding site" evidence="1">
    <location>
        <position position="37"/>
    </location>
    <ligand>
        <name>Zn(2+)</name>
        <dbReference type="ChEBI" id="CHEBI:29105"/>
    </ligand>
</feature>
<feature type="binding site" evidence="1">
    <location>
        <position position="40"/>
    </location>
    <ligand>
        <name>Zn(2+)</name>
        <dbReference type="ChEBI" id="CHEBI:29105"/>
    </ligand>
</feature>
<accession>Q3Z6W1</accession>